<sequence length="287" mass="33381">MTSLQRKGPQTRILSTGEEEKLKRDQALVSAFKQQKLEKEAQKNWDLFYKRNSTNFFKDRHWTTREFEELRSCREYEGQKLTLLEAGCGVGNCLFPLLEEDSNIFAYACDFSPRAVDYVKQHPLYNAERCKVFQCDLTRDDLLDHIPPESVDAVTLIFVLSAVHPEKMHLVLLNVYKVLKPGRSVLFRDYGLNDHAMLRFKAGSKLGENFYVRQDGTRSYFFTDEFLAKLFVDAGYEEVVNEYVFRETVNKKEGLCVPRVFLQSKFRKPPKDPAPTTDSASLLRKEF</sequence>
<keyword id="KW-0963">Cytoplasm</keyword>
<keyword id="KW-0489">Methyltransferase</keyword>
<keyword id="KW-0539">Nucleus</keyword>
<keyword id="KW-1185">Reference proteome</keyword>
<keyword id="KW-0949">S-adenosyl-L-methionine</keyword>
<keyword id="KW-0808">Transferase</keyword>
<keyword id="KW-0819">tRNA processing</keyword>
<protein>
    <recommendedName>
        <fullName evidence="4">tRNA N(3)-cytidine methyltransferase METTL6</fullName>
        <ecNumber evidence="1">2.1.1.-</ecNumber>
    </recommendedName>
    <alternativeName>
        <fullName>Methyltransferase-like protein 6</fullName>
    </alternativeName>
</protein>
<organism>
    <name type="scientific">Rattus norvegicus</name>
    <name type="common">Rat</name>
    <dbReference type="NCBI Taxonomy" id="10116"/>
    <lineage>
        <taxon>Eukaryota</taxon>
        <taxon>Metazoa</taxon>
        <taxon>Chordata</taxon>
        <taxon>Craniata</taxon>
        <taxon>Vertebrata</taxon>
        <taxon>Euteleostomi</taxon>
        <taxon>Mammalia</taxon>
        <taxon>Eutheria</taxon>
        <taxon>Euarchontoglires</taxon>
        <taxon>Glires</taxon>
        <taxon>Rodentia</taxon>
        <taxon>Myomorpha</taxon>
        <taxon>Muroidea</taxon>
        <taxon>Muridae</taxon>
        <taxon>Murinae</taxon>
        <taxon>Rattus</taxon>
    </lineage>
</organism>
<evidence type="ECO:0000250" key="1">
    <source>
        <dbReference type="UniProtKB" id="Q8BVH9"/>
    </source>
</evidence>
<evidence type="ECO:0000250" key="2">
    <source>
        <dbReference type="UniProtKB" id="Q8TCB7"/>
    </source>
</evidence>
<evidence type="ECO:0000256" key="3">
    <source>
        <dbReference type="SAM" id="MobiDB-lite"/>
    </source>
</evidence>
<evidence type="ECO:0000305" key="4"/>
<comment type="function">
    <text evidence="2">S-adenosyl-L-methionine-dependent methyltransferase that mediates N(3)-methylcytidine modification of residue 32 of the tRNA anticodon loop of tRNA(Ser), including tRNA(Ser)(UGA) and tRNA(Ser)(GCU). Interaction with SARS1/SerRS is required for N(3)-methylcytidine methylation.</text>
</comment>
<comment type="catalytic activity">
    <reaction evidence="1">
        <text>cytidine(32) in tRNA(Ser) + S-adenosyl-L-methionine = N(3)-methylcytidine(32) in tRNA(Ser) + S-adenosyl-L-homocysteine + H(+)</text>
        <dbReference type="Rhea" id="RHEA:50956"/>
        <dbReference type="Rhea" id="RHEA-COMP:12849"/>
        <dbReference type="Rhea" id="RHEA-COMP:12851"/>
        <dbReference type="ChEBI" id="CHEBI:15378"/>
        <dbReference type="ChEBI" id="CHEBI:57856"/>
        <dbReference type="ChEBI" id="CHEBI:59789"/>
        <dbReference type="ChEBI" id="CHEBI:74894"/>
        <dbReference type="ChEBI" id="CHEBI:82748"/>
    </reaction>
    <physiologicalReaction direction="left-to-right" evidence="1">
        <dbReference type="Rhea" id="RHEA:50957"/>
    </physiologicalReaction>
</comment>
<comment type="subunit">
    <text evidence="2">Monomer. Interacts with SARS1/SerRS; interaction is mediated via tRNA(Ser) and is required for N(3)-methylcytidine methylation.</text>
</comment>
<comment type="subcellular location">
    <subcellularLocation>
        <location evidence="2">Cytoplasm</location>
    </subcellularLocation>
    <subcellularLocation>
        <location evidence="2">Nucleus</location>
    </subcellularLocation>
</comment>
<comment type="similarity">
    <text evidence="4">Belongs to the methyltransferase superfamily. METL family.</text>
</comment>
<accession>Q6AXU8</accession>
<name>METL6_RAT</name>
<proteinExistence type="evidence at transcript level"/>
<reference key="1">
    <citation type="journal article" date="2004" name="Genome Res.">
        <title>The status, quality, and expansion of the NIH full-length cDNA project: the Mammalian Gene Collection (MGC).</title>
        <authorList>
            <consortium name="The MGC Project Team"/>
        </authorList>
    </citation>
    <scope>NUCLEOTIDE SEQUENCE [LARGE SCALE MRNA]</scope>
    <source>
        <tissue>Testis</tissue>
    </source>
</reference>
<feature type="chain" id="PRO_0000240314" description="tRNA N(3)-cytidine methyltransferase METTL6">
    <location>
        <begin position="1"/>
        <end position="287"/>
    </location>
</feature>
<feature type="region of interest" description="Disordered" evidence="3">
    <location>
        <begin position="267"/>
        <end position="287"/>
    </location>
</feature>
<feature type="binding site" evidence="2">
    <location>
        <position position="45"/>
    </location>
    <ligand>
        <name>S-adenosyl-L-methionine</name>
        <dbReference type="ChEBI" id="CHEBI:59789"/>
    </ligand>
</feature>
<feature type="binding site" evidence="2">
    <location>
        <position position="49"/>
    </location>
    <ligand>
        <name>S-adenosyl-L-methionine</name>
        <dbReference type="ChEBI" id="CHEBI:59789"/>
    </ligand>
</feature>
<feature type="binding site" evidence="2">
    <location>
        <position position="87"/>
    </location>
    <ligand>
        <name>S-adenosyl-L-methionine</name>
        <dbReference type="ChEBI" id="CHEBI:59789"/>
    </ligand>
</feature>
<feature type="binding site" evidence="2">
    <location>
        <position position="110"/>
    </location>
    <ligand>
        <name>S-adenosyl-L-methionine</name>
        <dbReference type="ChEBI" id="CHEBI:59789"/>
    </ligand>
</feature>
<feature type="binding site" evidence="2">
    <location>
        <position position="136"/>
    </location>
    <ligand>
        <name>S-adenosyl-L-methionine</name>
        <dbReference type="ChEBI" id="CHEBI:59789"/>
    </ligand>
</feature>
<feature type="binding site" evidence="2">
    <location>
        <position position="137"/>
    </location>
    <ligand>
        <name>S-adenosyl-L-methionine</name>
        <dbReference type="ChEBI" id="CHEBI:59789"/>
    </ligand>
</feature>
<feature type="binding site" evidence="2">
    <location>
        <position position="157"/>
    </location>
    <ligand>
        <name>S-adenosyl-L-methionine</name>
        <dbReference type="ChEBI" id="CHEBI:59789"/>
    </ligand>
</feature>
<dbReference type="EC" id="2.1.1.-" evidence="1"/>
<dbReference type="EMBL" id="BC079309">
    <property type="protein sequence ID" value="AAH79309.1"/>
    <property type="molecule type" value="mRNA"/>
</dbReference>
<dbReference type="RefSeq" id="NP_001007624.1">
    <property type="nucleotide sequence ID" value="NM_001007623.1"/>
</dbReference>
<dbReference type="RefSeq" id="XP_038950196.1">
    <property type="nucleotide sequence ID" value="XM_039094268.2"/>
</dbReference>
<dbReference type="SMR" id="Q6AXU8"/>
<dbReference type="FunCoup" id="Q6AXU8">
    <property type="interactions" value="2285"/>
</dbReference>
<dbReference type="STRING" id="10116.ENSRNOP00000074466"/>
<dbReference type="PhosphoSitePlus" id="Q6AXU8"/>
<dbReference type="PaxDb" id="10116-ENSRNOP00000026413"/>
<dbReference type="DNASU" id="290564"/>
<dbReference type="Ensembl" id="ENSRNOT00000084645.2">
    <property type="protein sequence ID" value="ENSRNOP00000074466.1"/>
    <property type="gene ID" value="ENSRNOG00000052391.2"/>
</dbReference>
<dbReference type="GeneID" id="290564"/>
<dbReference type="KEGG" id="rno:290564"/>
<dbReference type="UCSC" id="RGD:1359565">
    <property type="organism name" value="rat"/>
</dbReference>
<dbReference type="AGR" id="RGD:1359565"/>
<dbReference type="CTD" id="131965"/>
<dbReference type="RGD" id="1359565">
    <property type="gene designation" value="Mettl6"/>
</dbReference>
<dbReference type="eggNOG" id="KOG2361">
    <property type="taxonomic scope" value="Eukaryota"/>
</dbReference>
<dbReference type="GeneTree" id="ENSGT00390000018500"/>
<dbReference type="HOGENOM" id="CLU_029724_2_2_1"/>
<dbReference type="InParanoid" id="Q6AXU8"/>
<dbReference type="OMA" id="DAQRNWD"/>
<dbReference type="OrthoDB" id="417697at2759"/>
<dbReference type="PhylomeDB" id="Q6AXU8"/>
<dbReference type="TreeFam" id="TF321001"/>
<dbReference type="PRO" id="PR:Q6AXU8"/>
<dbReference type="Proteomes" id="UP000002494">
    <property type="component" value="Chromosome 16"/>
</dbReference>
<dbReference type="Bgee" id="ENSRNOG00000057372">
    <property type="expression patterns" value="Expressed in thymus and 19 other cell types or tissues"/>
</dbReference>
<dbReference type="GO" id="GO:0005737">
    <property type="term" value="C:cytoplasm"/>
    <property type="evidence" value="ECO:0000250"/>
    <property type="project" value="UniProtKB"/>
</dbReference>
<dbReference type="GO" id="GO:0005634">
    <property type="term" value="C:nucleus"/>
    <property type="evidence" value="ECO:0000250"/>
    <property type="project" value="UniProtKB"/>
</dbReference>
<dbReference type="GO" id="GO:0019899">
    <property type="term" value="F:enzyme binding"/>
    <property type="evidence" value="ECO:0000266"/>
    <property type="project" value="RGD"/>
</dbReference>
<dbReference type="GO" id="GO:0052735">
    <property type="term" value="F:tRNA (cytidine-3-)-methyltransferase activity"/>
    <property type="evidence" value="ECO:0000266"/>
    <property type="project" value="RGD"/>
</dbReference>
<dbReference type="GO" id="GO:0030488">
    <property type="term" value="P:tRNA methylation"/>
    <property type="evidence" value="ECO:0000266"/>
    <property type="project" value="RGD"/>
</dbReference>
<dbReference type="GO" id="GO:0006400">
    <property type="term" value="P:tRNA modification"/>
    <property type="evidence" value="ECO:0000266"/>
    <property type="project" value="RGD"/>
</dbReference>
<dbReference type="CDD" id="cd02440">
    <property type="entry name" value="AdoMet_MTases"/>
    <property type="match status" value="1"/>
</dbReference>
<dbReference type="FunFam" id="3.40.50.150:FF:000279">
    <property type="entry name" value="Methyltransferase-like protein"/>
    <property type="match status" value="1"/>
</dbReference>
<dbReference type="Gene3D" id="3.40.50.150">
    <property type="entry name" value="Vaccinia Virus protein VP39"/>
    <property type="match status" value="1"/>
</dbReference>
<dbReference type="InterPro" id="IPR013217">
    <property type="entry name" value="Methyltransf_12"/>
</dbReference>
<dbReference type="InterPro" id="IPR026113">
    <property type="entry name" value="METTL2/6/8-like"/>
</dbReference>
<dbReference type="InterPro" id="IPR029063">
    <property type="entry name" value="SAM-dependent_MTases_sf"/>
</dbReference>
<dbReference type="PANTHER" id="PTHR22809">
    <property type="entry name" value="METHYLTRANSFERASE-RELATED"/>
    <property type="match status" value="1"/>
</dbReference>
<dbReference type="PANTHER" id="PTHR22809:SF5">
    <property type="entry name" value="TRNA N(3)-METHYLCYTIDINE METHYLTRANSFERASE METTL6"/>
    <property type="match status" value="1"/>
</dbReference>
<dbReference type="Pfam" id="PF08242">
    <property type="entry name" value="Methyltransf_12"/>
    <property type="match status" value="1"/>
</dbReference>
<dbReference type="PIRSF" id="PIRSF037755">
    <property type="entry name" value="Mettl2_prd"/>
    <property type="match status" value="1"/>
</dbReference>
<dbReference type="SUPFAM" id="SSF53335">
    <property type="entry name" value="S-adenosyl-L-methionine-dependent methyltransferases"/>
    <property type="match status" value="1"/>
</dbReference>
<gene>
    <name type="primary">Mettl6</name>
</gene>